<accession>Q65Q91</accession>
<protein>
    <recommendedName>
        <fullName evidence="1">33 kDa chaperonin</fullName>
    </recommendedName>
    <alternativeName>
        <fullName evidence="1">Heat shock protein 33 homolog</fullName>
        <shortName evidence="1">HSP33</shortName>
    </alternativeName>
</protein>
<dbReference type="EMBL" id="AE016827">
    <property type="protein sequence ID" value="AAU38869.1"/>
    <property type="molecule type" value="Genomic_DNA"/>
</dbReference>
<dbReference type="RefSeq" id="WP_011201413.1">
    <property type="nucleotide sequence ID" value="NC_006300.1"/>
</dbReference>
<dbReference type="SMR" id="Q65Q91"/>
<dbReference type="STRING" id="221988.MS2262"/>
<dbReference type="KEGG" id="msu:MS2262"/>
<dbReference type="eggNOG" id="COG1281">
    <property type="taxonomic scope" value="Bacteria"/>
</dbReference>
<dbReference type="HOGENOM" id="CLU_054493_0_0_6"/>
<dbReference type="OrthoDB" id="9793753at2"/>
<dbReference type="Proteomes" id="UP000000607">
    <property type="component" value="Chromosome"/>
</dbReference>
<dbReference type="GO" id="GO:0005737">
    <property type="term" value="C:cytoplasm"/>
    <property type="evidence" value="ECO:0007669"/>
    <property type="project" value="UniProtKB-SubCell"/>
</dbReference>
<dbReference type="GO" id="GO:0044183">
    <property type="term" value="F:protein folding chaperone"/>
    <property type="evidence" value="ECO:0007669"/>
    <property type="project" value="TreeGrafter"/>
</dbReference>
<dbReference type="GO" id="GO:0051082">
    <property type="term" value="F:unfolded protein binding"/>
    <property type="evidence" value="ECO:0007669"/>
    <property type="project" value="UniProtKB-UniRule"/>
</dbReference>
<dbReference type="GO" id="GO:0042026">
    <property type="term" value="P:protein refolding"/>
    <property type="evidence" value="ECO:0007669"/>
    <property type="project" value="TreeGrafter"/>
</dbReference>
<dbReference type="CDD" id="cd00498">
    <property type="entry name" value="Hsp33"/>
    <property type="match status" value="1"/>
</dbReference>
<dbReference type="Gene3D" id="1.10.287.480">
    <property type="entry name" value="helix hairpin bin"/>
    <property type="match status" value="1"/>
</dbReference>
<dbReference type="Gene3D" id="3.55.30.10">
    <property type="entry name" value="Hsp33 domain"/>
    <property type="match status" value="1"/>
</dbReference>
<dbReference type="Gene3D" id="3.90.1280.10">
    <property type="entry name" value="HSP33 redox switch-like"/>
    <property type="match status" value="1"/>
</dbReference>
<dbReference type="HAMAP" id="MF_00117">
    <property type="entry name" value="HslO"/>
    <property type="match status" value="1"/>
</dbReference>
<dbReference type="InterPro" id="IPR000397">
    <property type="entry name" value="Heat_shock_Hsp33"/>
</dbReference>
<dbReference type="InterPro" id="IPR016154">
    <property type="entry name" value="Heat_shock_Hsp33_C"/>
</dbReference>
<dbReference type="InterPro" id="IPR016153">
    <property type="entry name" value="Heat_shock_Hsp33_N"/>
</dbReference>
<dbReference type="InterPro" id="IPR023212">
    <property type="entry name" value="Hsp33_helix_hairpin_bin_dom_sf"/>
</dbReference>
<dbReference type="NCBIfam" id="NF001033">
    <property type="entry name" value="PRK00114.1"/>
    <property type="match status" value="1"/>
</dbReference>
<dbReference type="PANTHER" id="PTHR30111">
    <property type="entry name" value="33 KDA CHAPERONIN"/>
    <property type="match status" value="1"/>
</dbReference>
<dbReference type="PANTHER" id="PTHR30111:SF1">
    <property type="entry name" value="33 KDA CHAPERONIN"/>
    <property type="match status" value="1"/>
</dbReference>
<dbReference type="Pfam" id="PF01430">
    <property type="entry name" value="HSP33"/>
    <property type="match status" value="1"/>
</dbReference>
<dbReference type="PIRSF" id="PIRSF005261">
    <property type="entry name" value="Heat_shock_Hsp33"/>
    <property type="match status" value="1"/>
</dbReference>
<dbReference type="SUPFAM" id="SSF64397">
    <property type="entry name" value="Hsp33 domain"/>
    <property type="match status" value="1"/>
</dbReference>
<dbReference type="SUPFAM" id="SSF118352">
    <property type="entry name" value="HSP33 redox switch-like"/>
    <property type="match status" value="1"/>
</dbReference>
<comment type="function">
    <text evidence="1">Redox regulated molecular chaperone. Protects both thermally unfolding and oxidatively damaged proteins from irreversible aggregation. Plays an important role in the bacterial defense system toward oxidative stress.</text>
</comment>
<comment type="subcellular location">
    <subcellularLocation>
        <location evidence="1">Cytoplasm</location>
    </subcellularLocation>
</comment>
<comment type="PTM">
    <text evidence="1">Under oxidizing conditions two disulfide bonds are formed involving the reactive cysteines. Under reducing conditions zinc is bound to the reactive cysteines and the protein is inactive.</text>
</comment>
<comment type="similarity">
    <text evidence="1">Belongs to the HSP33 family.</text>
</comment>
<organism>
    <name type="scientific">Mannheimia succiniciproducens (strain KCTC 0769BP / MBEL55E)</name>
    <dbReference type="NCBI Taxonomy" id="221988"/>
    <lineage>
        <taxon>Bacteria</taxon>
        <taxon>Pseudomonadati</taxon>
        <taxon>Pseudomonadota</taxon>
        <taxon>Gammaproteobacteria</taxon>
        <taxon>Pasteurellales</taxon>
        <taxon>Pasteurellaceae</taxon>
        <taxon>Basfia</taxon>
    </lineage>
</organism>
<sequence length="295" mass="33515">MNYMQDNDKLYRYLFQDRAVRGEWVRLNQTFIDTLNTHHYPNVVRNLLGEMMVATNLLTATLKFNGDITVQIQGDGPLRLALVNGNHRQQIRALARIDGEIRDDMSLHQLIGKGVLVITIAPQEGERYQGIIALDKPTVTECLEEYFQRSEQLQTQLLIRVGEYEGKPVAAGMLLQIMPDGSGSPDDFDHLATLTATVKDEEIFGLPAEELLYRLYHEETVELYEPQAIQFHCGCSQERSGSALLLINDDEIDEILEEHNGSIDMQCECCGTHYFFNKEAIEKLKKSGEEPVTTH</sequence>
<keyword id="KW-0143">Chaperone</keyword>
<keyword id="KW-0963">Cytoplasm</keyword>
<keyword id="KW-1015">Disulfide bond</keyword>
<keyword id="KW-0676">Redox-active center</keyword>
<keyword id="KW-0862">Zinc</keyword>
<evidence type="ECO:0000255" key="1">
    <source>
        <dbReference type="HAMAP-Rule" id="MF_00117"/>
    </source>
</evidence>
<feature type="chain" id="PRO_0000238075" description="33 kDa chaperonin">
    <location>
        <begin position="1"/>
        <end position="295"/>
    </location>
</feature>
<feature type="disulfide bond" description="Redox-active" evidence="1">
    <location>
        <begin position="233"/>
        <end position="235"/>
    </location>
</feature>
<feature type="disulfide bond" description="Redox-active" evidence="1">
    <location>
        <begin position="267"/>
        <end position="270"/>
    </location>
</feature>
<gene>
    <name evidence="1" type="primary">hslO</name>
    <name type="ordered locus">MS2262</name>
</gene>
<proteinExistence type="inferred from homology"/>
<name>HSLO_MANSM</name>
<reference key="1">
    <citation type="journal article" date="2004" name="Nat. Biotechnol.">
        <title>The genome sequence of the capnophilic rumen bacterium Mannheimia succiniciproducens.</title>
        <authorList>
            <person name="Hong S.H."/>
            <person name="Kim J.S."/>
            <person name="Lee S.Y."/>
            <person name="In Y.H."/>
            <person name="Choi S.S."/>
            <person name="Rih J.-K."/>
            <person name="Kim C.H."/>
            <person name="Jeong H."/>
            <person name="Hur C.G."/>
            <person name="Kim J.J."/>
        </authorList>
    </citation>
    <scope>NUCLEOTIDE SEQUENCE [LARGE SCALE GENOMIC DNA]</scope>
    <source>
        <strain>KCTC 0769BP / MBEL55E</strain>
    </source>
</reference>